<dbReference type="EC" id="7.1.1.2"/>
<dbReference type="EMBL" id="DQ856109">
    <property type="protein sequence ID" value="ABI54980.1"/>
    <property type="molecule type" value="Genomic_DNA"/>
</dbReference>
<dbReference type="EMBL" id="DQ856110">
    <property type="protein sequence ID" value="ABI54984.1"/>
    <property type="molecule type" value="Genomic_DNA"/>
</dbReference>
<dbReference type="EMBL" id="DQ856111">
    <property type="protein sequence ID" value="ABI54988.1"/>
    <property type="molecule type" value="Genomic_DNA"/>
</dbReference>
<dbReference type="EMBL" id="DQ856112">
    <property type="protein sequence ID" value="ABI54992.1"/>
    <property type="molecule type" value="Genomic_DNA"/>
</dbReference>
<dbReference type="SMR" id="A8DQI8"/>
<dbReference type="GO" id="GO:0005743">
    <property type="term" value="C:mitochondrial inner membrane"/>
    <property type="evidence" value="ECO:0000250"/>
    <property type="project" value="UniProtKB"/>
</dbReference>
<dbReference type="GO" id="GO:0045271">
    <property type="term" value="C:respiratory chain complex I"/>
    <property type="evidence" value="ECO:0000250"/>
    <property type="project" value="UniProtKB"/>
</dbReference>
<dbReference type="GO" id="GO:0008137">
    <property type="term" value="F:NADH dehydrogenase (ubiquinone) activity"/>
    <property type="evidence" value="ECO:0000250"/>
    <property type="project" value="UniProtKB"/>
</dbReference>
<dbReference type="GO" id="GO:0042773">
    <property type="term" value="P:ATP synthesis coupled electron transport"/>
    <property type="evidence" value="ECO:0007669"/>
    <property type="project" value="InterPro"/>
</dbReference>
<dbReference type="FunFam" id="1.10.287.3510:FF:000002">
    <property type="entry name" value="NADH-ubiquinone oxidoreductase chain 4L"/>
    <property type="match status" value="1"/>
</dbReference>
<dbReference type="Gene3D" id="1.10.287.3510">
    <property type="match status" value="1"/>
</dbReference>
<dbReference type="InterPro" id="IPR001133">
    <property type="entry name" value="NADH_UbQ_OxRdtase_chain4L/K"/>
</dbReference>
<dbReference type="InterPro" id="IPR039428">
    <property type="entry name" value="NUOK/Mnh_C1-like"/>
</dbReference>
<dbReference type="PANTHER" id="PTHR11434:SF0">
    <property type="entry name" value="NADH-UBIQUINONE OXIDOREDUCTASE CHAIN 4L"/>
    <property type="match status" value="1"/>
</dbReference>
<dbReference type="PANTHER" id="PTHR11434">
    <property type="entry name" value="NADH-UBIQUINONE OXIDOREDUCTASE SUBUNIT ND4L"/>
    <property type="match status" value="1"/>
</dbReference>
<dbReference type="Pfam" id="PF00420">
    <property type="entry name" value="Oxidored_q2"/>
    <property type="match status" value="1"/>
</dbReference>
<geneLocation type="mitochondrion"/>
<accession>A8DQI8</accession>
<protein>
    <recommendedName>
        <fullName>NADH-ubiquinone oxidoreductase chain 4L</fullName>
        <ecNumber>7.1.1.2</ecNumber>
    </recommendedName>
    <alternativeName>
        <fullName>NADH dehydrogenase subunit 4L</fullName>
    </alternativeName>
</protein>
<feature type="chain" id="PRO_0000323387" description="NADH-ubiquinone oxidoreductase chain 4L">
    <location>
        <begin position="1"/>
        <end position="98"/>
    </location>
</feature>
<feature type="transmembrane region" description="Helical" evidence="3">
    <location>
        <begin position="2"/>
        <end position="22"/>
    </location>
</feature>
<feature type="transmembrane region" description="Helical" evidence="3">
    <location>
        <begin position="29"/>
        <end position="49"/>
    </location>
</feature>
<feature type="transmembrane region" description="Helical" evidence="3">
    <location>
        <begin position="61"/>
        <end position="81"/>
    </location>
</feature>
<gene>
    <name type="primary">MT-ND4L</name>
    <name type="synonym">MTND4L</name>
    <name type="synonym">NADH4L</name>
    <name type="synonym">ND4L</name>
</gene>
<name>NU4LM_AVAUN</name>
<proteinExistence type="inferred from homology"/>
<comment type="function">
    <text evidence="1">Core subunit of the mitochondrial membrane respiratory chain NADH dehydrogenase (Complex I) which catalyzes electron transfer from NADH through the respiratory chain, using ubiquinone as an electron acceptor. Part of the enzyme membrane arm which is embedded in the lipid bilayer and involved in proton translocation.</text>
</comment>
<comment type="catalytic activity">
    <reaction evidence="1">
        <text>a ubiquinone + NADH + 5 H(+)(in) = a ubiquinol + NAD(+) + 4 H(+)(out)</text>
        <dbReference type="Rhea" id="RHEA:29091"/>
        <dbReference type="Rhea" id="RHEA-COMP:9565"/>
        <dbReference type="Rhea" id="RHEA-COMP:9566"/>
        <dbReference type="ChEBI" id="CHEBI:15378"/>
        <dbReference type="ChEBI" id="CHEBI:16389"/>
        <dbReference type="ChEBI" id="CHEBI:17976"/>
        <dbReference type="ChEBI" id="CHEBI:57540"/>
        <dbReference type="ChEBI" id="CHEBI:57945"/>
        <dbReference type="EC" id="7.1.1.2"/>
    </reaction>
    <physiologicalReaction direction="left-to-right" evidence="1">
        <dbReference type="Rhea" id="RHEA:29092"/>
    </physiologicalReaction>
</comment>
<comment type="subunit">
    <text evidence="2">Core subunit of respiratory chain NADH dehydrogenase (Complex I) which is composed of 45 different subunits.</text>
</comment>
<comment type="subcellular location">
    <subcellularLocation>
        <location evidence="2">Mitochondrion inner membrane</location>
        <topology evidence="3">Multi-pass membrane protein</topology>
    </subcellularLocation>
</comment>
<comment type="similarity">
    <text evidence="4">Belongs to the complex I subunit 4L family.</text>
</comment>
<evidence type="ECO:0000250" key="1">
    <source>
        <dbReference type="UniProtKB" id="P03901"/>
    </source>
</evidence>
<evidence type="ECO:0000250" key="2">
    <source>
        <dbReference type="UniProtKB" id="P03902"/>
    </source>
</evidence>
<evidence type="ECO:0000255" key="3"/>
<evidence type="ECO:0000305" key="4"/>
<reference key="1">
    <citation type="journal article" date="2007" name="Spec. Publ. Mus. Tex. Tech. Univ.">
        <title>Molecular phylogeny and taxonomic revision of the woolly lemurs, genus Avahi (primates: lemuriformes).</title>
        <authorList>
            <person name="Andriantompohavana R."/>
            <person name="Lei R."/>
            <person name="Zaonarivelo J.R."/>
            <person name="Engberg S.E."/>
            <person name="Nalanirina G."/>
            <person name="McGuire S.M."/>
            <person name="Shore G.D."/>
            <person name="Andrianasolo J."/>
            <person name="Herrington K."/>
            <person name="Brenneman R.A."/>
            <person name="Louis E.E. Jr."/>
        </authorList>
    </citation>
    <scope>NUCLEOTIDE SEQUENCE [GENOMIC DNA]</scope>
    <source>
        <strain>Isolate ANT5.10</strain>
        <strain>Isolate ANT5.12</strain>
        <strain>Isolate ANT5.8</strain>
        <strain>Isolate ANT5.9</strain>
    </source>
</reference>
<keyword id="KW-0249">Electron transport</keyword>
<keyword id="KW-0472">Membrane</keyword>
<keyword id="KW-0496">Mitochondrion</keyword>
<keyword id="KW-0999">Mitochondrion inner membrane</keyword>
<keyword id="KW-0520">NAD</keyword>
<keyword id="KW-0679">Respiratory chain</keyword>
<keyword id="KW-1278">Translocase</keyword>
<keyword id="KW-0812">Transmembrane</keyword>
<keyword id="KW-1133">Transmembrane helix</keyword>
<keyword id="KW-0813">Transport</keyword>
<keyword id="KW-0830">Ubiquinone</keyword>
<sequence length="98" mass="10787">MPPIFANIILAFATAFLGTLIFRSHLMSSLLCLEGMMLSMFILSTLIILNMHLTVSFMMPILLLVFAACEAAIGLALLVMVSNTYGLDYIKNLNLLQC</sequence>
<organism>
    <name type="scientific">Avahi unicolor</name>
    <name type="common">Sambirano woolly lemur</name>
    <dbReference type="NCBI Taxonomy" id="402239"/>
    <lineage>
        <taxon>Eukaryota</taxon>
        <taxon>Metazoa</taxon>
        <taxon>Chordata</taxon>
        <taxon>Craniata</taxon>
        <taxon>Vertebrata</taxon>
        <taxon>Euteleostomi</taxon>
        <taxon>Mammalia</taxon>
        <taxon>Eutheria</taxon>
        <taxon>Euarchontoglires</taxon>
        <taxon>Primates</taxon>
        <taxon>Strepsirrhini</taxon>
        <taxon>Lemuriformes</taxon>
        <taxon>Indriidae</taxon>
        <taxon>Avahi</taxon>
    </lineage>
</organism>